<name>RF2_SALAI</name>
<sequence length="373" mass="41417">MTDADFAEQLKDLDTTLRNIESVLDIDRLRADKARLEEAASAPDLWDDQARAQQVTSQLSYVNGEITKLTDLRSRLDDTQVLLELAEAESDPGVLTEVAAEITGLAKSIDEMEVRTLLSGEYDSREALVAIRAGAGGVDAADFAEMLLRMYLRWAERHGYPTEVYETSYAEEAGLKSATFTVKVPYAYGTLSVESGTHRLVRISPFDNQGRRQTSFAGVEVLPVVEQTDHIDIPENEMRTDVYRSSGPGGQSVNTTDSAVRITHIPTGIVVTCQNEKSQLQNKASALRVLQARLLERKRQEEQAKLQGLKTDAAGSWGDQMRSYVLHPYQMVKDLRTEQETGSPSSVFDGELDAFIEAGIRWRKQQQLSGDNV</sequence>
<reference key="1">
    <citation type="submission" date="2007-10" db="EMBL/GenBank/DDBJ databases">
        <title>Complete sequence of Salinispora arenicola CNS-205.</title>
        <authorList>
            <consortium name="US DOE Joint Genome Institute"/>
            <person name="Copeland A."/>
            <person name="Lucas S."/>
            <person name="Lapidus A."/>
            <person name="Barry K."/>
            <person name="Glavina del Rio T."/>
            <person name="Dalin E."/>
            <person name="Tice H."/>
            <person name="Pitluck S."/>
            <person name="Foster B."/>
            <person name="Schmutz J."/>
            <person name="Larimer F."/>
            <person name="Land M."/>
            <person name="Hauser L."/>
            <person name="Kyrpides N."/>
            <person name="Ivanova N."/>
            <person name="Jensen P.R."/>
            <person name="Moore B.S."/>
            <person name="Penn K."/>
            <person name="Jenkins C."/>
            <person name="Udwary D."/>
            <person name="Xiang L."/>
            <person name="Gontang E."/>
            <person name="Richardson P."/>
        </authorList>
    </citation>
    <scope>NUCLEOTIDE SEQUENCE [LARGE SCALE GENOMIC DNA]</scope>
    <source>
        <strain>CNS-205</strain>
    </source>
</reference>
<proteinExistence type="inferred from homology"/>
<keyword id="KW-0963">Cytoplasm</keyword>
<keyword id="KW-0488">Methylation</keyword>
<keyword id="KW-0648">Protein biosynthesis</keyword>
<gene>
    <name evidence="1" type="primary">prfB</name>
    <name type="ordered locus">Sare_0917</name>
</gene>
<accession>A8M3R1</accession>
<comment type="function">
    <text evidence="1">Peptide chain release factor 2 directs the termination of translation in response to the peptide chain termination codons UGA and UAA.</text>
</comment>
<comment type="subcellular location">
    <subcellularLocation>
        <location evidence="1">Cytoplasm</location>
    </subcellularLocation>
</comment>
<comment type="PTM">
    <text evidence="1">Methylated by PrmC. Methylation increases the termination efficiency of RF2.</text>
</comment>
<comment type="similarity">
    <text evidence="1">Belongs to the prokaryotic/mitochondrial release factor family.</text>
</comment>
<organism>
    <name type="scientific">Salinispora arenicola (strain CNS-205)</name>
    <dbReference type="NCBI Taxonomy" id="391037"/>
    <lineage>
        <taxon>Bacteria</taxon>
        <taxon>Bacillati</taxon>
        <taxon>Actinomycetota</taxon>
        <taxon>Actinomycetes</taxon>
        <taxon>Micromonosporales</taxon>
        <taxon>Micromonosporaceae</taxon>
        <taxon>Salinispora</taxon>
    </lineage>
</organism>
<evidence type="ECO:0000255" key="1">
    <source>
        <dbReference type="HAMAP-Rule" id="MF_00094"/>
    </source>
</evidence>
<dbReference type="EMBL" id="CP000850">
    <property type="protein sequence ID" value="ABV96834.1"/>
    <property type="molecule type" value="Genomic_DNA"/>
</dbReference>
<dbReference type="SMR" id="A8M3R1"/>
<dbReference type="STRING" id="391037.Sare_0917"/>
<dbReference type="KEGG" id="saq:Sare_0917"/>
<dbReference type="PATRIC" id="fig|391037.6.peg.936"/>
<dbReference type="eggNOG" id="COG1186">
    <property type="taxonomic scope" value="Bacteria"/>
</dbReference>
<dbReference type="HOGENOM" id="CLU_036856_6_0_11"/>
<dbReference type="OrthoDB" id="9806673at2"/>
<dbReference type="GO" id="GO:0005737">
    <property type="term" value="C:cytoplasm"/>
    <property type="evidence" value="ECO:0007669"/>
    <property type="project" value="UniProtKB-SubCell"/>
</dbReference>
<dbReference type="GO" id="GO:0016149">
    <property type="term" value="F:translation release factor activity, codon specific"/>
    <property type="evidence" value="ECO:0007669"/>
    <property type="project" value="UniProtKB-UniRule"/>
</dbReference>
<dbReference type="FunFam" id="3.30.160.20:FF:000010">
    <property type="entry name" value="Peptide chain release factor 2"/>
    <property type="match status" value="1"/>
</dbReference>
<dbReference type="Gene3D" id="3.30.160.20">
    <property type="match status" value="1"/>
</dbReference>
<dbReference type="Gene3D" id="3.30.70.1660">
    <property type="match status" value="1"/>
</dbReference>
<dbReference type="Gene3D" id="1.20.58.410">
    <property type="entry name" value="Release factor"/>
    <property type="match status" value="1"/>
</dbReference>
<dbReference type="HAMAP" id="MF_00094">
    <property type="entry name" value="Rel_fac_2"/>
    <property type="match status" value="1"/>
</dbReference>
<dbReference type="InterPro" id="IPR005139">
    <property type="entry name" value="PCRF"/>
</dbReference>
<dbReference type="InterPro" id="IPR000352">
    <property type="entry name" value="Pep_chain_release_fac_I"/>
</dbReference>
<dbReference type="InterPro" id="IPR045853">
    <property type="entry name" value="Pep_chain_release_fac_I_sf"/>
</dbReference>
<dbReference type="InterPro" id="IPR004374">
    <property type="entry name" value="PrfB"/>
</dbReference>
<dbReference type="NCBIfam" id="TIGR00020">
    <property type="entry name" value="prfB"/>
    <property type="match status" value="1"/>
</dbReference>
<dbReference type="PANTHER" id="PTHR43116:SF3">
    <property type="entry name" value="CLASS I PEPTIDE CHAIN RELEASE FACTOR"/>
    <property type="match status" value="1"/>
</dbReference>
<dbReference type="PANTHER" id="PTHR43116">
    <property type="entry name" value="PEPTIDE CHAIN RELEASE FACTOR 2"/>
    <property type="match status" value="1"/>
</dbReference>
<dbReference type="Pfam" id="PF03462">
    <property type="entry name" value="PCRF"/>
    <property type="match status" value="1"/>
</dbReference>
<dbReference type="Pfam" id="PF00472">
    <property type="entry name" value="RF-1"/>
    <property type="match status" value="1"/>
</dbReference>
<dbReference type="SMART" id="SM00937">
    <property type="entry name" value="PCRF"/>
    <property type="match status" value="1"/>
</dbReference>
<dbReference type="SUPFAM" id="SSF75620">
    <property type="entry name" value="Release factor"/>
    <property type="match status" value="1"/>
</dbReference>
<dbReference type="PROSITE" id="PS00745">
    <property type="entry name" value="RF_PROK_I"/>
    <property type="match status" value="1"/>
</dbReference>
<protein>
    <recommendedName>
        <fullName evidence="1">Peptide chain release factor 2</fullName>
        <shortName evidence="1">RF-2</shortName>
    </recommendedName>
</protein>
<feature type="chain" id="PRO_1000075528" description="Peptide chain release factor 2">
    <location>
        <begin position="1"/>
        <end position="373"/>
    </location>
</feature>
<feature type="modified residue" description="N5-methylglutamine" evidence="1">
    <location>
        <position position="251"/>
    </location>
</feature>